<reference key="1">
    <citation type="journal article" date="2002" name="Mycopathologia">
        <title>Cloning and functional expression of an esterase gene in Aspergillus parasitcus.</title>
        <authorList>
            <person name="Yu J."/>
            <person name="Chang P.K."/>
            <person name="Bhatnagar D."/>
            <person name="Cleveland T.E."/>
        </authorList>
    </citation>
    <scope>NUCLEOTIDE SEQUENCE [GENOMIC DNA]</scope>
    <scope>DEVELOPMENTAL STAGE</scope>
    <source>
        <strain>ATCC 56775 / NRRL 5862 / SRRC 143 / SU-1</strain>
    </source>
</reference>
<reference key="2">
    <citation type="submission" date="2015-02" db="EMBL/GenBank/DDBJ databases">
        <title>Draft genome sequence of Aspergillus parasiticus SU-1.</title>
        <authorList>
            <person name="Yu J."/>
            <person name="Fedorova N."/>
            <person name="Yin Y."/>
            <person name="Losada L."/>
            <person name="Zafar N."/>
            <person name="Taujale R."/>
            <person name="Ehrlich K.C."/>
            <person name="Bhatnagar D."/>
            <person name="Cleveland T.E."/>
            <person name="Bennett J.W."/>
            <person name="Nierman W.C."/>
        </authorList>
    </citation>
    <scope>NUCLEOTIDE SEQUENCE [LARGE SCALE GENOMIC DNA]</scope>
    <source>
        <strain>ATCC 56775 / NRRL 5862 / SRRC 143 / SU-1</strain>
    </source>
</reference>
<reference key="3">
    <citation type="journal article" date="2004" name="Appl. Environ. Microbiol.">
        <title>Clustered pathway genes in aflatoxin biosynthesis.</title>
        <authorList>
            <person name="Yu J."/>
            <person name="Chang P.K."/>
            <person name="Ehrlich K.C."/>
            <person name="Cary J.W."/>
            <person name="Bhatnagar D."/>
            <person name="Cleveland T.E."/>
            <person name="Payne G.A."/>
            <person name="Linz J.E."/>
            <person name="Woloshuk C.P."/>
            <person name="Bennett J.W."/>
        </authorList>
    </citation>
    <scope>FUNCTION</scope>
    <scope>PATHWAY</scope>
    <scope>NOMENCLATURE</scope>
</reference>
<reference key="4">
    <citation type="journal article" date="2004" name="Appl. Environ. Microbiol.">
        <title>The Aspergillus parasiticus estA-encoded esterase converts versiconal hemiacetal acetate to versiconal and versiconol acetate to versiconol in aflatoxin biosynthesis.</title>
        <authorList>
            <person name="Chang P.K."/>
            <person name="Yabe K."/>
            <person name="Yu J."/>
        </authorList>
    </citation>
    <scope>FUNCTION</scope>
    <scope>CATALYTIC ACTIVITY</scope>
</reference>
<reference key="5">
    <citation type="journal article" date="2004" name="FEBS Lett.">
        <title>Completed sequence of aflatoxin pathway gene cluster in Aspergillus parasiticus.</title>
        <authorList>
            <person name="Yu J."/>
            <person name="Bhatnagar D."/>
            <person name="Cleveland T.E."/>
        </authorList>
    </citation>
    <scope>PATHWAY</scope>
</reference>
<name>AFLJ_ASPPU</name>
<accession>Q6UEG5</accession>
<accession>A0A0F0HZ42</accession>
<sequence length="314" mass="34474">METPFAGPWHQFVEDLGQTPCLPGKDLDSILAGWGQLAGTLATRYGFPPPDESVATEDVQLDGLWLRCYTPANATGQEPVGLYFHGGGWVMGGVKEEDGFCRVISRQCQMRLVSVEYRKAPETRYPGALNDGVSAALWAQSRYENQPLVLMGTSAGGNLAFGTALRLIDQDMADKVSGVVALAPITVHPDAVPEHLKEQYTAYEENAELTVNSRAAMQVFFDCYKAPVDDVYTSCLLHPRLLALPKVYIAELGLDTLRDDARLMKGALDTAKVPVMYDAYPGYPHCSFMFPFKSLGEHQRTFLGGVAKAVRWMS</sequence>
<gene>
    <name evidence="7" type="primary">aflJ</name>
    <name evidence="6" type="synonym">estA</name>
    <name type="ORF">P875_00052989-2</name>
</gene>
<proteinExistence type="evidence at protein level"/>
<organism>
    <name type="scientific">Aspergillus parasiticus (strain ATCC 56775 / NRRL 5862 / SRRC 143 / SU-1)</name>
    <dbReference type="NCBI Taxonomy" id="1403190"/>
    <lineage>
        <taxon>Eukaryota</taxon>
        <taxon>Fungi</taxon>
        <taxon>Dikarya</taxon>
        <taxon>Ascomycota</taxon>
        <taxon>Pezizomycotina</taxon>
        <taxon>Eurotiomycetes</taxon>
        <taxon>Eurotiomycetidae</taxon>
        <taxon>Eurotiales</taxon>
        <taxon>Aspergillaceae</taxon>
        <taxon>Aspergillus</taxon>
        <taxon>Aspergillus subgen. Circumdati</taxon>
    </lineage>
</organism>
<dbReference type="EC" id="3.1.1.94" evidence="5"/>
<dbReference type="EMBL" id="AY371490">
    <property type="protein sequence ID" value="AAS66011.1"/>
    <property type="molecule type" value="Genomic_DNA"/>
</dbReference>
<dbReference type="EMBL" id="JZEE01000729">
    <property type="protein sequence ID" value="KJK60750.1"/>
    <property type="status" value="ALT_SEQ"/>
    <property type="molecule type" value="Genomic_DNA"/>
</dbReference>
<dbReference type="SMR" id="Q6UEG5"/>
<dbReference type="STRING" id="1403190.Q6UEG5"/>
<dbReference type="ESTHER" id="asppa-q6ueg5">
    <property type="family name" value="Hormone-sensitive_lipase_like"/>
</dbReference>
<dbReference type="KEGG" id="ag:AAS66011"/>
<dbReference type="OrthoDB" id="408631at2759"/>
<dbReference type="BioCyc" id="MetaCyc:MONOMER-14036"/>
<dbReference type="UniPathway" id="UPA00287"/>
<dbReference type="Proteomes" id="UP000033540">
    <property type="component" value="Unassembled WGS sequence"/>
</dbReference>
<dbReference type="GO" id="GO:0052689">
    <property type="term" value="F:carboxylic ester hydrolase activity"/>
    <property type="evidence" value="ECO:0000304"/>
    <property type="project" value="UniProtKB"/>
</dbReference>
<dbReference type="GO" id="GO:0140397">
    <property type="term" value="F:versiconal hemiacetal acetate esterase activity"/>
    <property type="evidence" value="ECO:0000314"/>
    <property type="project" value="UniProt"/>
</dbReference>
<dbReference type="GO" id="GO:0045122">
    <property type="term" value="P:aflatoxin biosynthetic process"/>
    <property type="evidence" value="ECO:0000314"/>
    <property type="project" value="UniProt"/>
</dbReference>
<dbReference type="FunFam" id="3.40.50.1820:FF:000510">
    <property type="entry name" value="AflJ/ estA/ esterase"/>
    <property type="match status" value="1"/>
</dbReference>
<dbReference type="Gene3D" id="3.40.50.1820">
    <property type="entry name" value="alpha/beta hydrolase"/>
    <property type="match status" value="1"/>
</dbReference>
<dbReference type="InterPro" id="IPR013094">
    <property type="entry name" value="AB_hydrolase_3"/>
</dbReference>
<dbReference type="InterPro" id="IPR029058">
    <property type="entry name" value="AB_hydrolase_fold"/>
</dbReference>
<dbReference type="InterPro" id="IPR050300">
    <property type="entry name" value="GDXG_lipolytic_enzyme"/>
</dbReference>
<dbReference type="PANTHER" id="PTHR48081">
    <property type="entry name" value="AB HYDROLASE SUPERFAMILY PROTEIN C4A8.06C"/>
    <property type="match status" value="1"/>
</dbReference>
<dbReference type="PANTHER" id="PTHR48081:SF8">
    <property type="entry name" value="ALPHA_BETA HYDROLASE FOLD-3 DOMAIN-CONTAINING PROTEIN-RELATED"/>
    <property type="match status" value="1"/>
</dbReference>
<dbReference type="Pfam" id="PF07859">
    <property type="entry name" value="Abhydrolase_3"/>
    <property type="match status" value="1"/>
</dbReference>
<dbReference type="SUPFAM" id="SSF53474">
    <property type="entry name" value="alpha/beta-Hydrolases"/>
    <property type="match status" value="1"/>
</dbReference>
<feature type="chain" id="PRO_0000424165" description="Versiconal hemiacetal acetate esterase">
    <location>
        <begin position="1"/>
        <end position="314"/>
    </location>
</feature>
<feature type="short sequence motif" description="Involved in the stabilization of the negatively charged intermediate by the formation of the oxyanion hole" evidence="2">
    <location>
        <begin position="85"/>
        <end position="87"/>
    </location>
</feature>
<feature type="active site" evidence="1">
    <location>
        <position position="154"/>
    </location>
</feature>
<feature type="active site" evidence="1">
    <location>
        <position position="255"/>
    </location>
</feature>
<feature type="active site" evidence="1">
    <location>
        <position position="285"/>
    </location>
</feature>
<comment type="function">
    <text evidence="5 10 11">Versiconal hemiacetal acetate esterase; part of the gene cluster that mediates the biosynthesis of aflatoxins, a group of polyketide-derived furanocoumarins, and part of the most toxic and carcinogenic compounds among the known mycotoxins (PubMed:15006741, PubMed:15094053, PubMed:15184162). The four major aflatoxins produced by A.parasiticus are aflatoxin B1 (AFB1), aflatoxin B2 (AFB2), aflatoxin G1 (AFG1) and aflatoxin G2 (AFG2) (PubMed:15006741). Within the aflatoxin pathway, the versiconal hemiacetal acetate esterase aflJ converts versiconal hemiacetal acetate (VHA) into versiconal (VAL) (PubMed:15006741, PubMed:15184162). The biosynthesis of aflatoxins begins with the norsolorinic acid synthase aflC that combines a hexanoyl starter unit produced by the fatty acid synthase aflA/aflB and 7 malonyl-CoA extender units to synthesize the precursor NOR. The second step is the conversion of NOR to averantin and requires the norsolorinic acid ketoreductase aflD, which catalyzes the dehydration of norsolorinic acid to form (1'S)-averantin. The norsolorinic acid reductases aflE and aflF may also play a role in the conversion of NOR to AVN. The cytochrome P450 monooxygenase aflG then catalyzes the hydroxylation of AVN to 5'hydroxyaverantin (HAVN). The next step is performed by the 5'-hydroxyaverantin dehydrogenase aflH that transforms HAVN to 5'-oxoaverantin (OAVN) which is further converted to averufin (AVF) by aflK that plays a dual role in the pathway, as a 5'-oxoaverantin cyclase that mediates conversion of 5'-oxoaverantin, as well as a versicolorin B synthase in a later step in the pathway. The averufin oxidase aflI catalyzes the conversion of AVF to versiconal hemiacetal acetate (VHA). VHA is then the substrate for the versiconal hemiacetal acetate esterase aflJ to yield versiconal (VAL). Versicolorin B synthase aflK then converts VAL to versicolorin B (VERB) by closing the bisfuran ring of aflatoxin which is required for DNA-binding, thus giving to aflatoxin its activity as a mutagen. Then, the activity of the versicolorin B desaturase aflL leads to versicolorin A (VERA). A branch point starts from VERB since it can also be converted to dihydrodemethylsterigmatocystin (DMDHST), probably also by aflL, VERA being a precursor for aflatoxins B1 and G1, and DMDHST for aflatoxins B2 and G2. Next, the versicolorin reductase aflM and the cytochrome P450 monooxygenase aflN are involved in conversion of VERA to demethylsterigmatocystin (DMST). AflX and aflY seem also involved in this step, through probable aflX-mediated epoxide ring-opening step following versicolorin A oxidation and aflY-mediated Baeyer-Villiger oxidation required for the formation of the xanthone ring. The methyltransferase aflO then leads to the modification of DMST to sterigmatocystin (ST), and of DMDHST to dihydrosterigmatocystin (DHST). Both ST and DHST are then substrates of the O-methyltransferase aflP to yield O-methylsterigmatocystin (OMST) and dihydro-O-methylsterigmatocystin (DHOMST), respectively. Finally OMST is converted to aflatoxins B1 and G1, and DHOMST to aflatoxins B2 and G2, via the action of several enzymes including O-methylsterigmatocystin oxidoreductase aflQ, the cytochrome P450 monooxygenase aflU, but also the NADH-dependent flavin oxidoreductase nadA which is specifically required for the synthesis of AFG1 (PubMed:15006741).</text>
</comment>
<comment type="catalytic activity">
    <reaction evidence="5">
        <text>(2S,3S)-versiconal hemiacetal acetate + H2O = (2S-3S)-versiconal hemiacetal + acetate + H(+)</text>
        <dbReference type="Rhea" id="RHEA:35715"/>
        <dbReference type="ChEBI" id="CHEBI:15377"/>
        <dbReference type="ChEBI" id="CHEBI:15378"/>
        <dbReference type="ChEBI" id="CHEBI:30089"/>
        <dbReference type="ChEBI" id="CHEBI:77950"/>
        <dbReference type="ChEBI" id="CHEBI:77975"/>
        <dbReference type="EC" id="3.1.1.94"/>
    </reaction>
    <physiologicalReaction direction="left-to-right" evidence="5">
        <dbReference type="Rhea" id="RHEA:35716"/>
    </physiologicalReaction>
</comment>
<comment type="catalytic activity">
    <reaction evidence="5">
        <text>(3S)-versiconol acetate + H2O = (S)-versiconol + acetate + H(+)</text>
        <dbReference type="Rhea" id="RHEA:35719"/>
        <dbReference type="ChEBI" id="CHEBI:15377"/>
        <dbReference type="ChEBI" id="CHEBI:15378"/>
        <dbReference type="ChEBI" id="CHEBI:30089"/>
        <dbReference type="ChEBI" id="CHEBI:72673"/>
        <dbReference type="ChEBI" id="CHEBI:77947"/>
        <dbReference type="EC" id="3.1.1.94"/>
    </reaction>
    <physiologicalReaction direction="left-to-right" evidence="5">
        <dbReference type="Rhea" id="RHEA:35720"/>
    </physiologicalReaction>
</comment>
<comment type="pathway">
    <text evidence="4">Mycotoxin biosynthesis; aflatoxin biosynthesis.</text>
</comment>
<comment type="developmental stage">
    <text evidence="3">Constitutively expressed.</text>
</comment>
<comment type="similarity">
    <text evidence="9">Belongs to the 'GDXG' lipolytic enzyme family.</text>
</comment>
<comment type="sequence caution" evidence="9">
    <conflict type="erroneous gene model prediction">
        <sequence resource="EMBL-CDS" id="KJK60750"/>
    </conflict>
    <text>The predicted gene P875_00052989 has been split into 2 genes: P875_00052996-1 (aflH) and P875_00052996-2 (aflJ).</text>
</comment>
<protein>
    <recommendedName>
        <fullName evidence="8">Versiconal hemiacetal acetate esterase</fullName>
        <ecNumber evidence="5">3.1.1.94</ecNumber>
    </recommendedName>
    <alternativeName>
        <fullName evidence="7">Aflatoxin biosynthesis protein J</fullName>
    </alternativeName>
    <alternativeName>
        <fullName evidence="6">Esterase A</fullName>
    </alternativeName>
</protein>
<evidence type="ECO:0000250" key="1">
    <source>
        <dbReference type="UniProtKB" id="P23872"/>
    </source>
</evidence>
<evidence type="ECO:0000250" key="2">
    <source>
        <dbReference type="UniProtKB" id="Q5NUF3"/>
    </source>
</evidence>
<evidence type="ECO:0000269" key="3">
    <source>
    </source>
</evidence>
<evidence type="ECO:0000269" key="4">
    <source>
    </source>
</evidence>
<evidence type="ECO:0000269" key="5">
    <source>
    </source>
</evidence>
<evidence type="ECO:0000303" key="6">
    <source>
    </source>
</evidence>
<evidence type="ECO:0000303" key="7">
    <source>
    </source>
</evidence>
<evidence type="ECO:0000303" key="8">
    <source>
    </source>
</evidence>
<evidence type="ECO:0000305" key="9"/>
<evidence type="ECO:0000305" key="10">
    <source>
    </source>
</evidence>
<evidence type="ECO:0000305" key="11">
    <source>
    </source>
</evidence>
<keyword id="KW-0378">Hydrolase</keyword>
<keyword id="KW-1185">Reference proteome</keyword>